<comment type="subunit">
    <text evidence="1">Forms oligomers.</text>
</comment>
<comment type="subcellular location">
    <subcellularLocation>
        <location evidence="1">Cytoplasm</location>
        <location evidence="1">Nucleoid</location>
    </subcellularLocation>
</comment>
<comment type="similarity">
    <text evidence="1">Belongs to the MraZ family.</text>
</comment>
<feature type="chain" id="PRO_1000191323" description="Transcriptional regulator MraZ">
    <location>
        <begin position="1"/>
        <end position="151"/>
    </location>
</feature>
<feature type="domain" description="SpoVT-AbrB 1" evidence="2">
    <location>
        <begin position="5"/>
        <end position="52"/>
    </location>
</feature>
<feature type="domain" description="SpoVT-AbrB 2" evidence="2">
    <location>
        <begin position="81"/>
        <end position="124"/>
    </location>
</feature>
<sequence>MFRGANAVSLDAKGRLAMPSRYRDELDSRCNGQLIVTIDAVDPCLCVYPLDEWEQIEAKLRALPSLREENRRLQRLLIGNAVDLELDGSGRFLVPPRLREYAKLDKKAMLVGQLNKFQLWDEDAWNAVSAADLAAIQQPGAMPDDLRDLIL</sequence>
<dbReference type="EMBL" id="CP000949">
    <property type="protein sequence ID" value="ACA71440.1"/>
    <property type="molecule type" value="Genomic_DNA"/>
</dbReference>
<dbReference type="SMR" id="B1J1Y1"/>
<dbReference type="STRING" id="390235.PputW619_0935"/>
<dbReference type="KEGG" id="ppw:PputW619_0935"/>
<dbReference type="eggNOG" id="COG2001">
    <property type="taxonomic scope" value="Bacteria"/>
</dbReference>
<dbReference type="HOGENOM" id="CLU_107907_2_0_6"/>
<dbReference type="OrthoDB" id="9807753at2"/>
<dbReference type="GO" id="GO:0005737">
    <property type="term" value="C:cytoplasm"/>
    <property type="evidence" value="ECO:0007669"/>
    <property type="project" value="UniProtKB-UniRule"/>
</dbReference>
<dbReference type="GO" id="GO:0009295">
    <property type="term" value="C:nucleoid"/>
    <property type="evidence" value="ECO:0007669"/>
    <property type="project" value="UniProtKB-SubCell"/>
</dbReference>
<dbReference type="GO" id="GO:0003700">
    <property type="term" value="F:DNA-binding transcription factor activity"/>
    <property type="evidence" value="ECO:0007669"/>
    <property type="project" value="UniProtKB-UniRule"/>
</dbReference>
<dbReference type="GO" id="GO:0000976">
    <property type="term" value="F:transcription cis-regulatory region binding"/>
    <property type="evidence" value="ECO:0007669"/>
    <property type="project" value="TreeGrafter"/>
</dbReference>
<dbReference type="GO" id="GO:2000143">
    <property type="term" value="P:negative regulation of DNA-templated transcription initiation"/>
    <property type="evidence" value="ECO:0007669"/>
    <property type="project" value="TreeGrafter"/>
</dbReference>
<dbReference type="CDD" id="cd16321">
    <property type="entry name" value="MraZ_C"/>
    <property type="match status" value="1"/>
</dbReference>
<dbReference type="CDD" id="cd16320">
    <property type="entry name" value="MraZ_N"/>
    <property type="match status" value="1"/>
</dbReference>
<dbReference type="Gene3D" id="3.40.1550.20">
    <property type="entry name" value="Transcriptional regulator MraZ domain"/>
    <property type="match status" value="1"/>
</dbReference>
<dbReference type="HAMAP" id="MF_01008">
    <property type="entry name" value="MraZ"/>
    <property type="match status" value="1"/>
</dbReference>
<dbReference type="InterPro" id="IPR003444">
    <property type="entry name" value="MraZ"/>
</dbReference>
<dbReference type="InterPro" id="IPR035644">
    <property type="entry name" value="MraZ_C"/>
</dbReference>
<dbReference type="InterPro" id="IPR020603">
    <property type="entry name" value="MraZ_dom"/>
</dbReference>
<dbReference type="InterPro" id="IPR035642">
    <property type="entry name" value="MraZ_N"/>
</dbReference>
<dbReference type="InterPro" id="IPR038619">
    <property type="entry name" value="MraZ_sf"/>
</dbReference>
<dbReference type="InterPro" id="IPR007159">
    <property type="entry name" value="SpoVT-AbrB_dom"/>
</dbReference>
<dbReference type="InterPro" id="IPR037914">
    <property type="entry name" value="SpoVT-AbrB_sf"/>
</dbReference>
<dbReference type="NCBIfam" id="TIGR00242">
    <property type="entry name" value="division/cell wall cluster transcriptional repressor MraZ"/>
    <property type="match status" value="1"/>
</dbReference>
<dbReference type="PANTHER" id="PTHR34701">
    <property type="entry name" value="TRANSCRIPTIONAL REGULATOR MRAZ"/>
    <property type="match status" value="1"/>
</dbReference>
<dbReference type="PANTHER" id="PTHR34701:SF1">
    <property type="entry name" value="TRANSCRIPTIONAL REGULATOR MRAZ"/>
    <property type="match status" value="1"/>
</dbReference>
<dbReference type="Pfam" id="PF02381">
    <property type="entry name" value="MraZ"/>
    <property type="match status" value="2"/>
</dbReference>
<dbReference type="SUPFAM" id="SSF89447">
    <property type="entry name" value="AbrB/MazE/MraZ-like"/>
    <property type="match status" value="1"/>
</dbReference>
<dbReference type="PROSITE" id="PS51740">
    <property type="entry name" value="SPOVT_ABRB"/>
    <property type="match status" value="2"/>
</dbReference>
<evidence type="ECO:0000255" key="1">
    <source>
        <dbReference type="HAMAP-Rule" id="MF_01008"/>
    </source>
</evidence>
<evidence type="ECO:0000255" key="2">
    <source>
        <dbReference type="PROSITE-ProRule" id="PRU01076"/>
    </source>
</evidence>
<keyword id="KW-0963">Cytoplasm</keyword>
<keyword id="KW-0238">DNA-binding</keyword>
<keyword id="KW-0677">Repeat</keyword>
<keyword id="KW-0804">Transcription</keyword>
<keyword id="KW-0805">Transcription regulation</keyword>
<proteinExistence type="inferred from homology"/>
<protein>
    <recommendedName>
        <fullName>Transcriptional regulator MraZ</fullName>
    </recommendedName>
</protein>
<name>MRAZ_PSEPW</name>
<organism>
    <name type="scientific">Pseudomonas putida (strain W619)</name>
    <dbReference type="NCBI Taxonomy" id="390235"/>
    <lineage>
        <taxon>Bacteria</taxon>
        <taxon>Pseudomonadati</taxon>
        <taxon>Pseudomonadota</taxon>
        <taxon>Gammaproteobacteria</taxon>
        <taxon>Pseudomonadales</taxon>
        <taxon>Pseudomonadaceae</taxon>
        <taxon>Pseudomonas</taxon>
    </lineage>
</organism>
<gene>
    <name evidence="1" type="primary">mraZ</name>
    <name type="ordered locus">PputW619_0935</name>
</gene>
<reference key="1">
    <citation type="submission" date="2008-02" db="EMBL/GenBank/DDBJ databases">
        <title>Complete sequence of Pseudomonas putida W619.</title>
        <authorList>
            <person name="Copeland A."/>
            <person name="Lucas S."/>
            <person name="Lapidus A."/>
            <person name="Barry K."/>
            <person name="Detter J.C."/>
            <person name="Glavina del Rio T."/>
            <person name="Dalin E."/>
            <person name="Tice H."/>
            <person name="Pitluck S."/>
            <person name="Chain P."/>
            <person name="Malfatti S."/>
            <person name="Shin M."/>
            <person name="Vergez L."/>
            <person name="Schmutz J."/>
            <person name="Larimer F."/>
            <person name="Land M."/>
            <person name="Hauser L."/>
            <person name="Kyrpides N."/>
            <person name="Kim E."/>
            <person name="Taghavi S."/>
            <person name="Vangronsveld D."/>
            <person name="van der Lelie D."/>
            <person name="Richardson P."/>
        </authorList>
    </citation>
    <scope>NUCLEOTIDE SEQUENCE [LARGE SCALE GENOMIC DNA]</scope>
    <source>
        <strain>W619</strain>
    </source>
</reference>
<accession>B1J1Y1</accession>